<proteinExistence type="inferred from homology"/>
<name>TDH_CROS8</name>
<gene>
    <name evidence="1" type="primary">tdh</name>
    <name type="ordered locus">ESA_04111</name>
</gene>
<dbReference type="EC" id="1.1.1.103" evidence="1"/>
<dbReference type="EMBL" id="CP000783">
    <property type="protein sequence ID" value="ABU79292.1"/>
    <property type="molecule type" value="Genomic_DNA"/>
</dbReference>
<dbReference type="RefSeq" id="WP_007895443.1">
    <property type="nucleotide sequence ID" value="NC_009778.1"/>
</dbReference>
<dbReference type="SMR" id="A7MID0"/>
<dbReference type="GeneID" id="56732745"/>
<dbReference type="KEGG" id="esa:ESA_04111"/>
<dbReference type="HOGENOM" id="CLU_026673_11_0_6"/>
<dbReference type="UniPathway" id="UPA00046">
    <property type="reaction ID" value="UER00505"/>
</dbReference>
<dbReference type="Proteomes" id="UP000000260">
    <property type="component" value="Chromosome"/>
</dbReference>
<dbReference type="GO" id="GO:0005737">
    <property type="term" value="C:cytoplasm"/>
    <property type="evidence" value="ECO:0007669"/>
    <property type="project" value="UniProtKB-SubCell"/>
</dbReference>
<dbReference type="GO" id="GO:0008743">
    <property type="term" value="F:L-threonine 3-dehydrogenase activity"/>
    <property type="evidence" value="ECO:0007669"/>
    <property type="project" value="UniProtKB-UniRule"/>
</dbReference>
<dbReference type="GO" id="GO:0008270">
    <property type="term" value="F:zinc ion binding"/>
    <property type="evidence" value="ECO:0007669"/>
    <property type="project" value="UniProtKB-UniRule"/>
</dbReference>
<dbReference type="GO" id="GO:0019518">
    <property type="term" value="P:L-threonine catabolic process to glycine"/>
    <property type="evidence" value="ECO:0007669"/>
    <property type="project" value="UniProtKB-UniPathway"/>
</dbReference>
<dbReference type="FunFam" id="3.40.50.720:FF:000059">
    <property type="entry name" value="L-threonine 3-dehydrogenase"/>
    <property type="match status" value="1"/>
</dbReference>
<dbReference type="Gene3D" id="3.90.180.10">
    <property type="entry name" value="Medium-chain alcohol dehydrogenases, catalytic domain"/>
    <property type="match status" value="1"/>
</dbReference>
<dbReference type="Gene3D" id="3.40.50.720">
    <property type="entry name" value="NAD(P)-binding Rossmann-like Domain"/>
    <property type="match status" value="1"/>
</dbReference>
<dbReference type="HAMAP" id="MF_00627">
    <property type="entry name" value="Thr_dehydrog"/>
    <property type="match status" value="1"/>
</dbReference>
<dbReference type="InterPro" id="IPR013149">
    <property type="entry name" value="ADH-like_C"/>
</dbReference>
<dbReference type="InterPro" id="IPR013154">
    <property type="entry name" value="ADH-like_N"/>
</dbReference>
<dbReference type="InterPro" id="IPR002328">
    <property type="entry name" value="ADH_Zn_CS"/>
</dbReference>
<dbReference type="InterPro" id="IPR011032">
    <property type="entry name" value="GroES-like_sf"/>
</dbReference>
<dbReference type="InterPro" id="IPR004627">
    <property type="entry name" value="L-Threonine_3-DHase"/>
</dbReference>
<dbReference type="InterPro" id="IPR036291">
    <property type="entry name" value="NAD(P)-bd_dom_sf"/>
</dbReference>
<dbReference type="InterPro" id="IPR020843">
    <property type="entry name" value="PKS_ER"/>
</dbReference>
<dbReference type="InterPro" id="IPR050129">
    <property type="entry name" value="Zn_alcohol_dh"/>
</dbReference>
<dbReference type="NCBIfam" id="NF003808">
    <property type="entry name" value="PRK05396.1"/>
    <property type="match status" value="1"/>
</dbReference>
<dbReference type="NCBIfam" id="TIGR00692">
    <property type="entry name" value="tdh"/>
    <property type="match status" value="1"/>
</dbReference>
<dbReference type="PANTHER" id="PTHR43401">
    <property type="entry name" value="L-THREONINE 3-DEHYDROGENASE"/>
    <property type="match status" value="1"/>
</dbReference>
<dbReference type="PANTHER" id="PTHR43401:SF2">
    <property type="entry name" value="L-THREONINE 3-DEHYDROGENASE"/>
    <property type="match status" value="1"/>
</dbReference>
<dbReference type="Pfam" id="PF08240">
    <property type="entry name" value="ADH_N"/>
    <property type="match status" value="1"/>
</dbReference>
<dbReference type="Pfam" id="PF00107">
    <property type="entry name" value="ADH_zinc_N"/>
    <property type="match status" value="1"/>
</dbReference>
<dbReference type="SMART" id="SM00829">
    <property type="entry name" value="PKS_ER"/>
    <property type="match status" value="1"/>
</dbReference>
<dbReference type="SUPFAM" id="SSF50129">
    <property type="entry name" value="GroES-like"/>
    <property type="match status" value="1"/>
</dbReference>
<dbReference type="SUPFAM" id="SSF51735">
    <property type="entry name" value="NAD(P)-binding Rossmann-fold domains"/>
    <property type="match status" value="1"/>
</dbReference>
<dbReference type="PROSITE" id="PS00059">
    <property type="entry name" value="ADH_ZINC"/>
    <property type="match status" value="1"/>
</dbReference>
<comment type="function">
    <text evidence="1">Catalyzes the NAD(+)-dependent oxidation of L-threonine to 2-amino-3-ketobutyrate.</text>
</comment>
<comment type="catalytic activity">
    <reaction evidence="1">
        <text>L-threonine + NAD(+) = (2S)-2-amino-3-oxobutanoate + NADH + H(+)</text>
        <dbReference type="Rhea" id="RHEA:13161"/>
        <dbReference type="ChEBI" id="CHEBI:15378"/>
        <dbReference type="ChEBI" id="CHEBI:57540"/>
        <dbReference type="ChEBI" id="CHEBI:57926"/>
        <dbReference type="ChEBI" id="CHEBI:57945"/>
        <dbReference type="ChEBI" id="CHEBI:78948"/>
        <dbReference type="EC" id="1.1.1.103"/>
    </reaction>
</comment>
<comment type="cofactor">
    <cofactor evidence="1">
        <name>Zn(2+)</name>
        <dbReference type="ChEBI" id="CHEBI:29105"/>
    </cofactor>
    <text evidence="1">Binds 2 Zn(2+) ions per subunit.</text>
</comment>
<comment type="pathway">
    <text evidence="1">Amino-acid degradation; L-threonine degradation via oxydo-reductase pathway; glycine from L-threonine: step 1/2.</text>
</comment>
<comment type="subunit">
    <text evidence="1">Homotetramer.</text>
</comment>
<comment type="subcellular location">
    <subcellularLocation>
        <location evidence="1">Cytoplasm</location>
    </subcellularLocation>
</comment>
<comment type="similarity">
    <text evidence="1">Belongs to the zinc-containing alcohol dehydrogenase family.</text>
</comment>
<feature type="chain" id="PRO_1000051635" description="L-threonine 3-dehydrogenase">
    <location>
        <begin position="1"/>
        <end position="341"/>
    </location>
</feature>
<feature type="active site" description="Charge relay system" evidence="1">
    <location>
        <position position="40"/>
    </location>
</feature>
<feature type="active site" description="Charge relay system" evidence="1">
    <location>
        <position position="43"/>
    </location>
</feature>
<feature type="binding site" evidence="1">
    <location>
        <position position="38"/>
    </location>
    <ligand>
        <name>Zn(2+)</name>
        <dbReference type="ChEBI" id="CHEBI:29105"/>
        <label>1</label>
        <note>catalytic</note>
    </ligand>
</feature>
<feature type="binding site" evidence="1">
    <location>
        <position position="63"/>
    </location>
    <ligand>
        <name>Zn(2+)</name>
        <dbReference type="ChEBI" id="CHEBI:29105"/>
        <label>1</label>
        <note>catalytic</note>
    </ligand>
</feature>
<feature type="binding site" evidence="1">
    <location>
        <position position="64"/>
    </location>
    <ligand>
        <name>Zn(2+)</name>
        <dbReference type="ChEBI" id="CHEBI:29105"/>
        <label>1</label>
        <note>catalytic</note>
    </ligand>
</feature>
<feature type="binding site" evidence="1">
    <location>
        <position position="93"/>
    </location>
    <ligand>
        <name>Zn(2+)</name>
        <dbReference type="ChEBI" id="CHEBI:29105"/>
        <label>2</label>
    </ligand>
</feature>
<feature type="binding site" evidence="1">
    <location>
        <position position="96"/>
    </location>
    <ligand>
        <name>Zn(2+)</name>
        <dbReference type="ChEBI" id="CHEBI:29105"/>
        <label>2</label>
    </ligand>
</feature>
<feature type="binding site" evidence="1">
    <location>
        <position position="99"/>
    </location>
    <ligand>
        <name>Zn(2+)</name>
        <dbReference type="ChEBI" id="CHEBI:29105"/>
        <label>2</label>
    </ligand>
</feature>
<feature type="binding site" evidence="1">
    <location>
        <position position="107"/>
    </location>
    <ligand>
        <name>Zn(2+)</name>
        <dbReference type="ChEBI" id="CHEBI:29105"/>
        <label>2</label>
    </ligand>
</feature>
<feature type="binding site" evidence="1">
    <location>
        <position position="175"/>
    </location>
    <ligand>
        <name>NAD(+)</name>
        <dbReference type="ChEBI" id="CHEBI:57540"/>
    </ligand>
</feature>
<feature type="binding site" evidence="1">
    <location>
        <position position="195"/>
    </location>
    <ligand>
        <name>NAD(+)</name>
        <dbReference type="ChEBI" id="CHEBI:57540"/>
    </ligand>
</feature>
<feature type="binding site" evidence="1">
    <location>
        <position position="200"/>
    </location>
    <ligand>
        <name>NAD(+)</name>
        <dbReference type="ChEBI" id="CHEBI:57540"/>
    </ligand>
</feature>
<feature type="binding site" evidence="1">
    <location>
        <begin position="262"/>
        <end position="264"/>
    </location>
    <ligand>
        <name>NAD(+)</name>
        <dbReference type="ChEBI" id="CHEBI:57540"/>
    </ligand>
</feature>
<feature type="binding site" evidence="1">
    <location>
        <begin position="286"/>
        <end position="287"/>
    </location>
    <ligand>
        <name>NAD(+)</name>
        <dbReference type="ChEBI" id="CHEBI:57540"/>
    </ligand>
</feature>
<feature type="site" description="Important for catalytic activity for the proton relay mechanism but does not participate directly in the coordination of zinc atom" evidence="1">
    <location>
        <position position="148"/>
    </location>
</feature>
<sequence length="341" mass="37212">MKALSKLKPAEGIWMTDVPEPEVGHNDLLIKIRKTAICGTDVHIYNWDEWSQKTIPVPMVVGHEYVGEVVGIGQEVKGFKIGDRVSGEGHITCGHCRNCRGGRTHLCRNTVGVGVNRPGCFAEYLVIPAFNAFKIPDNISDDLASIFDPFGNAVHTALSFDLVGEDVLVSGAGPIGIMAAAVAKHVGARNVVITDVNEYRLSLARKMGVTRAVNVANESLQDVMNELGMTEGFDVGLEMSGAPPAFRTMLDTMNHGGRIAMLGIPPSDMSIDWNKVIFKGLFIKGIYGREMFETWYKMAALIQSGLDLSPIITHRFTIDDFQKGFDAMRSGQSGKVILSWD</sequence>
<reference key="1">
    <citation type="journal article" date="2010" name="PLoS ONE">
        <title>Genome sequence of Cronobacter sakazakii BAA-894 and comparative genomic hybridization analysis with other Cronobacter species.</title>
        <authorList>
            <person name="Kucerova E."/>
            <person name="Clifton S.W."/>
            <person name="Xia X.Q."/>
            <person name="Long F."/>
            <person name="Porwollik S."/>
            <person name="Fulton L."/>
            <person name="Fronick C."/>
            <person name="Minx P."/>
            <person name="Kyung K."/>
            <person name="Warren W."/>
            <person name="Fulton R."/>
            <person name="Feng D."/>
            <person name="Wollam A."/>
            <person name="Shah N."/>
            <person name="Bhonagiri V."/>
            <person name="Nash W.E."/>
            <person name="Hallsworth-Pepin K."/>
            <person name="Wilson R.K."/>
            <person name="McClelland M."/>
            <person name="Forsythe S.J."/>
        </authorList>
    </citation>
    <scope>NUCLEOTIDE SEQUENCE [LARGE SCALE GENOMIC DNA]</scope>
    <source>
        <strain>ATCC BAA-894</strain>
    </source>
</reference>
<organism>
    <name type="scientific">Cronobacter sakazakii (strain ATCC BAA-894)</name>
    <name type="common">Enterobacter sakazakii</name>
    <dbReference type="NCBI Taxonomy" id="290339"/>
    <lineage>
        <taxon>Bacteria</taxon>
        <taxon>Pseudomonadati</taxon>
        <taxon>Pseudomonadota</taxon>
        <taxon>Gammaproteobacteria</taxon>
        <taxon>Enterobacterales</taxon>
        <taxon>Enterobacteriaceae</taxon>
        <taxon>Cronobacter</taxon>
    </lineage>
</organism>
<accession>A7MID0</accession>
<keyword id="KW-0963">Cytoplasm</keyword>
<keyword id="KW-0479">Metal-binding</keyword>
<keyword id="KW-0520">NAD</keyword>
<keyword id="KW-0560">Oxidoreductase</keyword>
<keyword id="KW-1185">Reference proteome</keyword>
<keyword id="KW-0862">Zinc</keyword>
<evidence type="ECO:0000255" key="1">
    <source>
        <dbReference type="HAMAP-Rule" id="MF_00627"/>
    </source>
</evidence>
<protein>
    <recommendedName>
        <fullName evidence="1">L-threonine 3-dehydrogenase</fullName>
        <shortName evidence="1">TDH</shortName>
        <ecNumber evidence="1">1.1.1.103</ecNumber>
    </recommendedName>
</protein>